<dbReference type="EMBL" id="BC103191">
    <property type="protein sequence ID" value="AAI03192.1"/>
    <property type="molecule type" value="mRNA"/>
</dbReference>
<dbReference type="RefSeq" id="NP_001029922.1">
    <property type="nucleotide sequence ID" value="NM_001034750.2"/>
</dbReference>
<dbReference type="RefSeq" id="XP_005216445.1">
    <property type="nucleotide sequence ID" value="XM_005216388.5"/>
</dbReference>
<dbReference type="SMR" id="Q3ZBP0"/>
<dbReference type="FunCoup" id="Q3ZBP0">
    <property type="interactions" value="188"/>
</dbReference>
<dbReference type="STRING" id="9913.ENSBTAP00000028797"/>
<dbReference type="PaxDb" id="9913-ENSBTAP00000028797"/>
<dbReference type="Ensembl" id="ENSBTAT00000028797.3">
    <property type="protein sequence ID" value="ENSBTAP00000028797.2"/>
    <property type="gene ID" value="ENSBTAG00000021611.6"/>
</dbReference>
<dbReference type="GeneID" id="614192"/>
<dbReference type="KEGG" id="bta:614192"/>
<dbReference type="CTD" id="119710"/>
<dbReference type="VEuPathDB" id="HostDB:ENSBTAG00000021611"/>
<dbReference type="VGNC" id="VGNC:52633">
    <property type="gene designation" value="IFTAP"/>
</dbReference>
<dbReference type="eggNOG" id="ENOG502S1X7">
    <property type="taxonomic scope" value="Eukaryota"/>
</dbReference>
<dbReference type="GeneTree" id="ENSGT00390000013149"/>
<dbReference type="HOGENOM" id="CLU_077972_0_0_1"/>
<dbReference type="InParanoid" id="Q3ZBP0"/>
<dbReference type="OMA" id="KFINCHE"/>
<dbReference type="OrthoDB" id="10057631at2759"/>
<dbReference type="TreeFam" id="TF335968"/>
<dbReference type="Proteomes" id="UP000009136">
    <property type="component" value="Chromosome 15"/>
</dbReference>
<dbReference type="Bgee" id="ENSBTAG00000021611">
    <property type="expression patterns" value="Expressed in oocyte and 106 other cell types or tissues"/>
</dbReference>
<dbReference type="GO" id="GO:0097731">
    <property type="term" value="C:9+0 non-motile cilium"/>
    <property type="evidence" value="ECO:0000318"/>
    <property type="project" value="GO_Central"/>
</dbReference>
<dbReference type="GO" id="GO:0005829">
    <property type="term" value="C:cytosol"/>
    <property type="evidence" value="ECO:0000318"/>
    <property type="project" value="GO_Central"/>
</dbReference>
<dbReference type="GO" id="GO:0120160">
    <property type="term" value="F:intraciliary transport particle A binding"/>
    <property type="evidence" value="ECO:0000250"/>
    <property type="project" value="UniProtKB"/>
</dbReference>
<dbReference type="GO" id="GO:0007340">
    <property type="term" value="P:acrosome reaction"/>
    <property type="evidence" value="ECO:0000318"/>
    <property type="project" value="GO_Central"/>
</dbReference>
<dbReference type="GO" id="GO:0007283">
    <property type="term" value="P:spermatogenesis"/>
    <property type="evidence" value="ECO:0000318"/>
    <property type="project" value="GO_Central"/>
</dbReference>
<dbReference type="InterPro" id="IPR040028">
    <property type="entry name" value="IFTAP"/>
</dbReference>
<dbReference type="PANTHER" id="PTHR35543:SF1">
    <property type="entry name" value="INTRAFLAGELLAR TRANSPORT-ASSOCIATED PROTEIN"/>
    <property type="match status" value="1"/>
</dbReference>
<dbReference type="PANTHER" id="PTHR35543">
    <property type="entry name" value="PROTEIN C11ORF74"/>
    <property type="match status" value="1"/>
</dbReference>
<dbReference type="Pfam" id="PF17722">
    <property type="entry name" value="IFTAP"/>
    <property type="match status" value="1"/>
</dbReference>
<accession>Q3ZBP0</accession>
<evidence type="ECO:0000250" key="1">
    <source>
        <dbReference type="UniProtKB" id="Q86VG3"/>
    </source>
</evidence>
<name>IFTAP_BOVIN</name>
<sequence length="242" mass="27213">MPAKTPELEMMDEDRLIEEVLDKFVNCHEQTYEEFLRTFTHLSKDNVTKREAFGTNSSENNFTSIKFTQRNEPNDCRLSNKAIFLHTSSQCSEEEQIMIGDGQKAGSSFQGDLNRAGKVKVDNFLDIEDLDLDEEINPQLSKDVLLLPGQVEQEVSLSVPSYIPSVAIQPVTPGTKPRPTVKAADKQSKEIVGDEVQPFSLDEEFDYDAVVLTPKFTPAEMNAIKELSKQKTKSADLEDPHD</sequence>
<keyword id="KW-0597">Phosphoprotein</keyword>
<keyword id="KW-1185">Reference proteome</keyword>
<protein>
    <recommendedName>
        <fullName>Intraflagellar transport-associated protein</fullName>
    </recommendedName>
    <alternativeName>
        <fullName>Protein HEPIS</fullName>
    </alternativeName>
</protein>
<feature type="chain" id="PRO_0000288853" description="Intraflagellar transport-associated protein">
    <location>
        <begin position="1"/>
        <end position="242"/>
    </location>
</feature>
<feature type="modified residue" description="Phosphoserine" evidence="1">
    <location>
        <position position="57"/>
    </location>
</feature>
<comment type="function">
    <text evidence="1">Seems to play a role in ciliary BBSome localization, maybe through interaction with IFT-A complex.</text>
</comment>
<comment type="subunit">
    <text evidence="1">Interacts with IFT122; the interaction associates IFTAP with IFT-A complex.</text>
</comment>
<reference key="1">
    <citation type="submission" date="2005-08" db="EMBL/GenBank/DDBJ databases">
        <authorList>
            <consortium name="NIH - Mammalian Gene Collection (MGC) project"/>
        </authorList>
    </citation>
    <scope>NUCLEOTIDE SEQUENCE [LARGE SCALE MRNA]</scope>
    <source>
        <strain>Hereford</strain>
        <tissue>Heart ventricle</tissue>
    </source>
</reference>
<gene>
    <name type="primary">IFTAP</name>
</gene>
<organism>
    <name type="scientific">Bos taurus</name>
    <name type="common">Bovine</name>
    <dbReference type="NCBI Taxonomy" id="9913"/>
    <lineage>
        <taxon>Eukaryota</taxon>
        <taxon>Metazoa</taxon>
        <taxon>Chordata</taxon>
        <taxon>Craniata</taxon>
        <taxon>Vertebrata</taxon>
        <taxon>Euteleostomi</taxon>
        <taxon>Mammalia</taxon>
        <taxon>Eutheria</taxon>
        <taxon>Laurasiatheria</taxon>
        <taxon>Artiodactyla</taxon>
        <taxon>Ruminantia</taxon>
        <taxon>Pecora</taxon>
        <taxon>Bovidae</taxon>
        <taxon>Bovinae</taxon>
        <taxon>Bos</taxon>
    </lineage>
</organism>
<proteinExistence type="evidence at transcript level"/>